<proteinExistence type="inferred from homology"/>
<name>GON2_DICLA</name>
<comment type="function">
    <text evidence="1">Stimulates the secretion of gonadotropins.</text>
</comment>
<comment type="subcellular location">
    <subcellularLocation>
        <location>Secreted</location>
    </subcellularLocation>
</comment>
<comment type="similarity">
    <text evidence="2">Belongs to the GnRH family.</text>
</comment>
<protein>
    <recommendedName>
        <fullName>Progonadoliberin-2</fullName>
    </recommendedName>
    <alternativeName>
        <fullName>Progonadoliberin II</fullName>
    </alternativeName>
    <component>
        <recommendedName>
            <fullName>Gonadoliberin-2</fullName>
        </recommendedName>
        <alternativeName>
            <fullName>Gonadoliberin II</fullName>
        </alternativeName>
        <alternativeName>
            <fullName>Gonadotropin-releasing hormone II</fullName>
            <shortName>GnRH II</shortName>
        </alternativeName>
        <alternativeName>
            <fullName>Luliberin II</fullName>
        </alternativeName>
        <alternativeName>
            <fullName>Luteinizing hormone-releasing hormone II</fullName>
            <shortName>LH-RH II</shortName>
        </alternativeName>
    </component>
    <component>
        <recommendedName>
            <fullName>GnRH-associated peptide 2</fullName>
        </recommendedName>
        <alternativeName>
            <fullName>GnRH-associated peptide II</fullName>
        </alternativeName>
    </component>
</protein>
<organism>
    <name type="scientific">Dicentrarchus labrax</name>
    <name type="common">European seabass</name>
    <name type="synonym">Morone labrax</name>
    <dbReference type="NCBI Taxonomy" id="13489"/>
    <lineage>
        <taxon>Eukaryota</taxon>
        <taxon>Metazoa</taxon>
        <taxon>Chordata</taxon>
        <taxon>Craniata</taxon>
        <taxon>Vertebrata</taxon>
        <taxon>Euteleostomi</taxon>
        <taxon>Actinopterygii</taxon>
        <taxon>Neopterygii</taxon>
        <taxon>Teleostei</taxon>
        <taxon>Neoteleostei</taxon>
        <taxon>Acanthomorphata</taxon>
        <taxon>Eupercaria</taxon>
        <taxon>Moronidae</taxon>
        <taxon>Dicentrarchus</taxon>
    </lineage>
</organism>
<evidence type="ECO:0000250" key="1"/>
<evidence type="ECO:0000305" key="2"/>
<sequence>MCVSRLVLLFGLLLCVGAQLSNAQHWSHGWYPGGKRELDSFGTSEISEEIKLCEAGECSYLRPQRRSVLRNIILDALARELQKRK</sequence>
<accession>Q9IA08</accession>
<gene>
    <name type="primary">gnrh2</name>
</gene>
<feature type="signal peptide" evidence="1">
    <location>
        <begin position="1"/>
        <end position="23"/>
    </location>
</feature>
<feature type="chain" id="PRO_0000012477" description="Progonadoliberin-2">
    <location>
        <begin position="24"/>
        <end position="85"/>
    </location>
</feature>
<feature type="peptide" id="PRO_0000012478" description="Gonadoliberin-2">
    <location>
        <begin position="24"/>
        <end position="33"/>
    </location>
</feature>
<feature type="peptide" id="PRO_0000012479" description="GnRH-associated peptide 2">
    <location>
        <begin position="37"/>
        <end position="85"/>
    </location>
</feature>
<feature type="modified residue" description="Pyrrolidone carboxylic acid" evidence="1">
    <location>
        <position position="24"/>
    </location>
</feature>
<feature type="modified residue" description="Glycine amide" evidence="1">
    <location>
        <position position="33"/>
    </location>
</feature>
<dbReference type="EMBL" id="AF224281">
    <property type="protein sequence ID" value="AAF62900.1"/>
    <property type="molecule type" value="mRNA"/>
</dbReference>
<dbReference type="RefSeq" id="XP_051270658.1">
    <property type="nucleotide sequence ID" value="XM_051414698.1"/>
</dbReference>
<dbReference type="GeneID" id="127371718"/>
<dbReference type="OMA" id="CAQHWSH"/>
<dbReference type="OrthoDB" id="8490433at2759"/>
<dbReference type="Proteomes" id="UP000694389">
    <property type="component" value="Unplaced"/>
</dbReference>
<dbReference type="GO" id="GO:0005615">
    <property type="term" value="C:extracellular space"/>
    <property type="evidence" value="ECO:0000250"/>
    <property type="project" value="UniProtKB"/>
</dbReference>
<dbReference type="GO" id="GO:0005183">
    <property type="term" value="F:gonadotropin hormone-releasing hormone activity"/>
    <property type="evidence" value="ECO:0007669"/>
    <property type="project" value="TreeGrafter"/>
</dbReference>
<dbReference type="GO" id="GO:0031530">
    <property type="term" value="F:gonadotropin-releasing hormone receptor binding"/>
    <property type="evidence" value="ECO:0007669"/>
    <property type="project" value="TreeGrafter"/>
</dbReference>
<dbReference type="InterPro" id="IPR002012">
    <property type="entry name" value="GnRH"/>
</dbReference>
<dbReference type="InterPro" id="IPR019792">
    <property type="entry name" value="Gonadoliberin"/>
</dbReference>
<dbReference type="PANTHER" id="PTHR10522">
    <property type="entry name" value="GONADOLIBERIN"/>
    <property type="match status" value="1"/>
</dbReference>
<dbReference type="PANTHER" id="PTHR10522:SF8">
    <property type="entry name" value="PROGONADOLIBERIN"/>
    <property type="match status" value="1"/>
</dbReference>
<dbReference type="Pfam" id="PF00446">
    <property type="entry name" value="GnRH"/>
    <property type="match status" value="1"/>
</dbReference>
<dbReference type="PROSITE" id="PS00473">
    <property type="entry name" value="GNRH"/>
    <property type="match status" value="1"/>
</dbReference>
<keyword id="KW-0027">Amidation</keyword>
<keyword id="KW-0165">Cleavage on pair of basic residues</keyword>
<keyword id="KW-0372">Hormone</keyword>
<keyword id="KW-0873">Pyrrolidone carboxylic acid</keyword>
<keyword id="KW-1185">Reference proteome</keyword>
<keyword id="KW-0964">Secreted</keyword>
<keyword id="KW-0732">Signal</keyword>
<reference key="1">
    <citation type="journal article" date="2001" name="J. Comp. Neurol.">
        <title>Differential expression of three different prepro-GnRH (gonadotrophin-releasing hormone) messengers in the brain of the European sea bass (Dicentrarchus labrax).</title>
        <authorList>
            <person name="Gonzalez-Martinez D."/>
            <person name="Madigou T."/>
            <person name="Zmora N."/>
            <person name="Anglade I."/>
            <person name="Zanuy S."/>
            <person name="Zohar Y."/>
            <person name="Elizur A."/>
            <person name="Munoz-Cueto J.A."/>
            <person name="Kah O."/>
        </authorList>
    </citation>
    <scope>NUCLEOTIDE SEQUENCE [MRNA]</scope>
    <source>
        <tissue>Brain</tissue>
    </source>
</reference>